<gene>
    <name evidence="1" type="primary">dtd</name>
    <name type="ordered locus">PA14_67100</name>
</gene>
<sequence length="145" mass="15560">MKALLQRVGAARVEVGGEIVGSIDRGLLVLVGVEPEDGERCAAKMLHKLLNYRVFGDDEGKMNRSLLDVQGGLLLVSQFTLAANTRSGLRPSFSSAAPPAQGETVFEHLVKLAREAYPQVATGRFGADMQVHLVNDGPVTFLLES</sequence>
<proteinExistence type="inferred from homology"/>
<name>DTD_PSEAB</name>
<organism>
    <name type="scientific">Pseudomonas aeruginosa (strain UCBPP-PA14)</name>
    <dbReference type="NCBI Taxonomy" id="208963"/>
    <lineage>
        <taxon>Bacteria</taxon>
        <taxon>Pseudomonadati</taxon>
        <taxon>Pseudomonadota</taxon>
        <taxon>Gammaproteobacteria</taxon>
        <taxon>Pseudomonadales</taxon>
        <taxon>Pseudomonadaceae</taxon>
        <taxon>Pseudomonas</taxon>
    </lineage>
</organism>
<evidence type="ECO:0000255" key="1">
    <source>
        <dbReference type="HAMAP-Rule" id="MF_00518"/>
    </source>
</evidence>
<keyword id="KW-0963">Cytoplasm</keyword>
<keyword id="KW-0378">Hydrolase</keyword>
<keyword id="KW-0694">RNA-binding</keyword>
<keyword id="KW-0820">tRNA-binding</keyword>
<feature type="chain" id="PRO_1000050870" description="D-aminoacyl-tRNA deacylase">
    <location>
        <begin position="1"/>
        <end position="145"/>
    </location>
</feature>
<feature type="short sequence motif" description="Gly-cisPro motif, important for rejection of L-amino acids" evidence="1">
    <location>
        <begin position="137"/>
        <end position="138"/>
    </location>
</feature>
<comment type="function">
    <text evidence="1">An aminoacyl-tRNA editing enzyme that deacylates mischarged D-aminoacyl-tRNAs. Also deacylates mischarged glycyl-tRNA(Ala), protecting cells against glycine mischarging by AlaRS. Acts via tRNA-based rather than protein-based catalysis; rejects L-amino acids rather than detecting D-amino acids in the active site. By recycling D-aminoacyl-tRNA to D-amino acids and free tRNA molecules, this enzyme counteracts the toxicity associated with the formation of D-aminoacyl-tRNA entities in vivo and helps enforce protein L-homochirality.</text>
</comment>
<comment type="catalytic activity">
    <reaction evidence="1">
        <text>glycyl-tRNA(Ala) + H2O = tRNA(Ala) + glycine + H(+)</text>
        <dbReference type="Rhea" id="RHEA:53744"/>
        <dbReference type="Rhea" id="RHEA-COMP:9657"/>
        <dbReference type="Rhea" id="RHEA-COMP:13640"/>
        <dbReference type="ChEBI" id="CHEBI:15377"/>
        <dbReference type="ChEBI" id="CHEBI:15378"/>
        <dbReference type="ChEBI" id="CHEBI:57305"/>
        <dbReference type="ChEBI" id="CHEBI:78442"/>
        <dbReference type="ChEBI" id="CHEBI:78522"/>
        <dbReference type="EC" id="3.1.1.96"/>
    </reaction>
</comment>
<comment type="catalytic activity">
    <reaction evidence="1">
        <text>a D-aminoacyl-tRNA + H2O = a tRNA + a D-alpha-amino acid + H(+)</text>
        <dbReference type="Rhea" id="RHEA:13953"/>
        <dbReference type="Rhea" id="RHEA-COMP:10123"/>
        <dbReference type="Rhea" id="RHEA-COMP:10124"/>
        <dbReference type="ChEBI" id="CHEBI:15377"/>
        <dbReference type="ChEBI" id="CHEBI:15378"/>
        <dbReference type="ChEBI" id="CHEBI:59871"/>
        <dbReference type="ChEBI" id="CHEBI:78442"/>
        <dbReference type="ChEBI" id="CHEBI:79333"/>
        <dbReference type="EC" id="3.1.1.96"/>
    </reaction>
</comment>
<comment type="subunit">
    <text evidence="1">Homodimer.</text>
</comment>
<comment type="subcellular location">
    <subcellularLocation>
        <location evidence="1">Cytoplasm</location>
    </subcellularLocation>
</comment>
<comment type="domain">
    <text evidence="1">A Gly-cisPro motif from one monomer fits into the active site of the other monomer to allow specific chiral rejection of L-amino acids.</text>
</comment>
<comment type="similarity">
    <text evidence="1">Belongs to the DTD family.</text>
</comment>
<protein>
    <recommendedName>
        <fullName evidence="1">D-aminoacyl-tRNA deacylase</fullName>
        <shortName evidence="1">DTD</shortName>
        <ecNumber evidence="1">3.1.1.96</ecNumber>
    </recommendedName>
    <alternativeName>
        <fullName evidence="1">Gly-tRNA(Ala) deacylase</fullName>
    </alternativeName>
</protein>
<reference key="1">
    <citation type="journal article" date="2006" name="Genome Biol.">
        <title>Genomic analysis reveals that Pseudomonas aeruginosa virulence is combinatorial.</title>
        <authorList>
            <person name="Lee D.G."/>
            <person name="Urbach J.M."/>
            <person name="Wu G."/>
            <person name="Liberati N.T."/>
            <person name="Feinbaum R.L."/>
            <person name="Miyata S."/>
            <person name="Diggins L.T."/>
            <person name="He J."/>
            <person name="Saucier M."/>
            <person name="Deziel E."/>
            <person name="Friedman L."/>
            <person name="Li L."/>
            <person name="Grills G."/>
            <person name="Montgomery K."/>
            <person name="Kucherlapati R."/>
            <person name="Rahme L.G."/>
            <person name="Ausubel F.M."/>
        </authorList>
    </citation>
    <scope>NUCLEOTIDE SEQUENCE [LARGE SCALE GENOMIC DNA]</scope>
    <source>
        <strain>UCBPP-PA14</strain>
    </source>
</reference>
<dbReference type="EC" id="3.1.1.96" evidence="1"/>
<dbReference type="EMBL" id="CP000438">
    <property type="protein sequence ID" value="ABJ14461.1"/>
    <property type="molecule type" value="Genomic_DNA"/>
</dbReference>
<dbReference type="RefSeq" id="WP_003095916.1">
    <property type="nucleotide sequence ID" value="NZ_CP034244.1"/>
</dbReference>
<dbReference type="SMR" id="Q02ET8"/>
<dbReference type="KEGG" id="pau:PA14_67100"/>
<dbReference type="PseudoCAP" id="PA14_67100"/>
<dbReference type="HOGENOM" id="CLU_076901_1_1_6"/>
<dbReference type="BioCyc" id="PAER208963:G1G74-5660-MONOMER"/>
<dbReference type="Proteomes" id="UP000000653">
    <property type="component" value="Chromosome"/>
</dbReference>
<dbReference type="GO" id="GO:0005737">
    <property type="term" value="C:cytoplasm"/>
    <property type="evidence" value="ECO:0007669"/>
    <property type="project" value="UniProtKB-SubCell"/>
</dbReference>
<dbReference type="GO" id="GO:0051500">
    <property type="term" value="F:D-tyrosyl-tRNA(Tyr) deacylase activity"/>
    <property type="evidence" value="ECO:0007669"/>
    <property type="project" value="TreeGrafter"/>
</dbReference>
<dbReference type="GO" id="GO:0106026">
    <property type="term" value="F:Gly-tRNA(Ala) deacylase activity"/>
    <property type="evidence" value="ECO:0007669"/>
    <property type="project" value="UniProtKB-UniRule"/>
</dbReference>
<dbReference type="GO" id="GO:0043908">
    <property type="term" value="F:Ser(Gly)-tRNA(Ala) hydrolase activity"/>
    <property type="evidence" value="ECO:0007669"/>
    <property type="project" value="UniProtKB-UniRule"/>
</dbReference>
<dbReference type="GO" id="GO:0000049">
    <property type="term" value="F:tRNA binding"/>
    <property type="evidence" value="ECO:0007669"/>
    <property type="project" value="UniProtKB-UniRule"/>
</dbReference>
<dbReference type="GO" id="GO:0019478">
    <property type="term" value="P:D-amino acid catabolic process"/>
    <property type="evidence" value="ECO:0007669"/>
    <property type="project" value="UniProtKB-UniRule"/>
</dbReference>
<dbReference type="CDD" id="cd00563">
    <property type="entry name" value="Dtyr_deacylase"/>
    <property type="match status" value="1"/>
</dbReference>
<dbReference type="FunFam" id="3.50.80.10:FF:000001">
    <property type="entry name" value="D-aminoacyl-tRNA deacylase"/>
    <property type="match status" value="1"/>
</dbReference>
<dbReference type="Gene3D" id="3.50.80.10">
    <property type="entry name" value="D-tyrosyl-tRNA(Tyr) deacylase"/>
    <property type="match status" value="1"/>
</dbReference>
<dbReference type="HAMAP" id="MF_00518">
    <property type="entry name" value="Deacylase_Dtd"/>
    <property type="match status" value="1"/>
</dbReference>
<dbReference type="InterPro" id="IPR003732">
    <property type="entry name" value="Daa-tRNA_deacyls_DTD"/>
</dbReference>
<dbReference type="InterPro" id="IPR023509">
    <property type="entry name" value="DTD-like_sf"/>
</dbReference>
<dbReference type="NCBIfam" id="TIGR00256">
    <property type="entry name" value="D-aminoacyl-tRNA deacylase"/>
    <property type="match status" value="1"/>
</dbReference>
<dbReference type="PANTHER" id="PTHR10472:SF5">
    <property type="entry name" value="D-AMINOACYL-TRNA DEACYLASE 1"/>
    <property type="match status" value="1"/>
</dbReference>
<dbReference type="PANTHER" id="PTHR10472">
    <property type="entry name" value="D-TYROSYL-TRNA TYR DEACYLASE"/>
    <property type="match status" value="1"/>
</dbReference>
<dbReference type="Pfam" id="PF02580">
    <property type="entry name" value="Tyr_Deacylase"/>
    <property type="match status" value="1"/>
</dbReference>
<dbReference type="SUPFAM" id="SSF69500">
    <property type="entry name" value="DTD-like"/>
    <property type="match status" value="1"/>
</dbReference>
<accession>Q02ET8</accession>